<gene>
    <name evidence="4" type="primary">aneA</name>
    <name type="ORF">ASPACDRAFT_119783</name>
</gene>
<organism>
    <name type="scientific">Aspergillus aculeatus (strain ATCC 16872 / CBS 172.66 / WB 5094)</name>
    <dbReference type="NCBI Taxonomy" id="690307"/>
    <lineage>
        <taxon>Eukaryota</taxon>
        <taxon>Fungi</taxon>
        <taxon>Dikarya</taxon>
        <taxon>Ascomycota</taxon>
        <taxon>Pezizomycotina</taxon>
        <taxon>Eurotiomycetes</taxon>
        <taxon>Eurotiomycetidae</taxon>
        <taxon>Eurotiales</taxon>
        <taxon>Aspergillaceae</taxon>
        <taxon>Aspergillus</taxon>
        <taxon>Aspergillus subgen. Circumdati</taxon>
    </lineage>
</organism>
<keyword id="KW-0223">Dioxygenase</keyword>
<keyword id="KW-0408">Iron</keyword>
<keyword id="KW-0479">Metal-binding</keyword>
<keyword id="KW-0560">Oxidoreductase</keyword>
<keyword id="KW-1185">Reference proteome</keyword>
<dbReference type="EC" id="1.14.11.-" evidence="3"/>
<dbReference type="EMBL" id="KV878977">
    <property type="protein sequence ID" value="OJJ99912.1"/>
    <property type="molecule type" value="Genomic_DNA"/>
</dbReference>
<dbReference type="RefSeq" id="XP_020056252.1">
    <property type="nucleotide sequence ID" value="XM_020196277.1"/>
</dbReference>
<dbReference type="SMR" id="A0A1L9WUX8"/>
<dbReference type="STRING" id="690307.A0A1L9WUX8"/>
<dbReference type="GeneID" id="30970091"/>
<dbReference type="VEuPathDB" id="FungiDB:ASPACDRAFT_119783"/>
<dbReference type="OMA" id="ANIHIPR"/>
<dbReference type="OrthoDB" id="445007at2759"/>
<dbReference type="Proteomes" id="UP000184546">
    <property type="component" value="Unassembled WGS sequence"/>
</dbReference>
<dbReference type="GO" id="GO:0051213">
    <property type="term" value="F:dioxygenase activity"/>
    <property type="evidence" value="ECO:0007669"/>
    <property type="project" value="UniProtKB-KW"/>
</dbReference>
<dbReference type="GO" id="GO:0046872">
    <property type="term" value="F:metal ion binding"/>
    <property type="evidence" value="ECO:0007669"/>
    <property type="project" value="UniProtKB-KW"/>
</dbReference>
<dbReference type="GO" id="GO:0009058">
    <property type="term" value="P:biosynthetic process"/>
    <property type="evidence" value="ECO:0007669"/>
    <property type="project" value="UniProtKB-ARBA"/>
</dbReference>
<dbReference type="Gene3D" id="2.60.120.620">
    <property type="entry name" value="q2cbj1_9rhob like domain"/>
    <property type="match status" value="1"/>
</dbReference>
<dbReference type="InterPro" id="IPR008775">
    <property type="entry name" value="Phytyl_CoA_dOase-like"/>
</dbReference>
<dbReference type="PANTHER" id="PTHR20883:SF19">
    <property type="entry name" value="MULTIFUNCTIONAL DIOXYGENASE AUSE"/>
    <property type="match status" value="1"/>
</dbReference>
<dbReference type="PANTHER" id="PTHR20883">
    <property type="entry name" value="PHYTANOYL-COA DIOXYGENASE DOMAIN CONTAINING 1"/>
    <property type="match status" value="1"/>
</dbReference>
<dbReference type="Pfam" id="PF05721">
    <property type="entry name" value="PhyH"/>
    <property type="match status" value="1"/>
</dbReference>
<dbReference type="SUPFAM" id="SSF51197">
    <property type="entry name" value="Clavaminate synthase-like"/>
    <property type="match status" value="1"/>
</dbReference>
<sequence>MTRSSPKSILRRVAAHEGAPKILQVLKEDGAVIIRGFLNQNLFQKLNKEMEDELAKRPLICEHNGEWVSGLAGSQTRRLNQLPAFSPTFRQEILNHPLFHEICEPLFGTHGCDYWMNTATVVQIGPGNAAQSLHRDQELYPVFNPIGKDAPEALVNFFCALSTFTDENGATRVIPGSHQWDDFTTDVTRCVPQTIPAEMEAGDCLLFSGKTVHGGGANRSKDNVRRGMALGVQATYLTAEENYQHIPREIVESMTPLAQKMIHWRSSYCPGGAGLWQINGTELANEIGLKANQPKKTI</sequence>
<accession>A0A1L9WUX8</accession>
<comment type="function">
    <text evidence="3">Dioxygenase; part of the gene cluster that mediates the biosynthesis of aculenes, a unique type of norsesquiterpenes that contain a nordaucane skeleton linked to an L-proline moiety and are of mixed biosynthetic origin (PubMed:31618514). The pathway begins with the synthesis of dauca-4,7-diene by the terpene cyclase aneC using farnesyl pyrophosphate (FPP) as substrate (PubMed:31618514). The cytochrome P450 monooxygenase aneF then performs the initial oxidation at C-12 of dauca-4,7-diene to yield asperaculane D (PubMed:31618514). Asperaculane D is substrate of the cytochrome P450 monooxygenase aneD for C-10 hydroxylation to yield asperaculane E (PubMed:31618514). The cytochrome P450 monooxygenase aneG then converts asperaculane E into aculene D via C-2 oxidation (PubMed:31618514). The monomodular nonribosomal peptide synthase aneB adenylates L-proline and the thiohydrolase aneE transfers this activated L-proline derivative to aculenes D and C to produce respectively aculenes B and A (PubMed:31618514). The dioxygenase aneA converts aculene D into aculene C, and aculene B into aculene A by introducing the 5,6-alkene moiety (PubMed:31618514). Asperculanes A, B, C and F, as well as 14-prolyl asperculane C, might be shunt products of the pathway (PubMed:31618514).</text>
</comment>
<comment type="catalytic activity">
    <reaction evidence="3">
        <text>aculene D + 2-oxoglutarate + O2 = aculene C + succinate + CO2 + H2O</text>
        <dbReference type="Rhea" id="RHEA:65112"/>
        <dbReference type="ChEBI" id="CHEBI:15377"/>
        <dbReference type="ChEBI" id="CHEBI:15379"/>
        <dbReference type="ChEBI" id="CHEBI:16526"/>
        <dbReference type="ChEBI" id="CHEBI:16810"/>
        <dbReference type="ChEBI" id="CHEBI:30031"/>
        <dbReference type="ChEBI" id="CHEBI:155910"/>
        <dbReference type="ChEBI" id="CHEBI:155912"/>
    </reaction>
    <physiologicalReaction direction="left-to-right" evidence="3">
        <dbReference type="Rhea" id="RHEA:65113"/>
    </physiologicalReaction>
</comment>
<comment type="catalytic activity">
    <reaction evidence="3">
        <text>aculene B + 2-oxoglutarate + O2 = aculene A + succinate + CO2 + H2O</text>
        <dbReference type="Rhea" id="RHEA:65116"/>
        <dbReference type="ChEBI" id="CHEBI:15377"/>
        <dbReference type="ChEBI" id="CHEBI:15379"/>
        <dbReference type="ChEBI" id="CHEBI:16526"/>
        <dbReference type="ChEBI" id="CHEBI:16810"/>
        <dbReference type="ChEBI" id="CHEBI:30031"/>
        <dbReference type="ChEBI" id="CHEBI:155913"/>
        <dbReference type="ChEBI" id="CHEBI:155914"/>
    </reaction>
    <physiologicalReaction direction="left-to-right" evidence="3">
        <dbReference type="Rhea" id="RHEA:65117"/>
    </physiologicalReaction>
</comment>
<comment type="cofactor">
    <cofactor evidence="2">
        <name>Fe cation</name>
        <dbReference type="ChEBI" id="CHEBI:24875"/>
    </cofactor>
</comment>
<comment type="pathway">
    <text evidence="3">Secondary metabolite biosynthesis.</text>
</comment>
<comment type="subunit">
    <text evidence="2">Homodimer.</text>
</comment>
<comment type="disruption phenotype">
    <text evidence="3">Abolishes the production of aculenes A and C, and accumulates aculenes B and D, as well as a minor component, asperaculane B.</text>
</comment>
<comment type="similarity">
    <text evidence="5">Belongs to the PhyH family.</text>
</comment>
<evidence type="ECO:0000250" key="1">
    <source>
        <dbReference type="UniProtKB" id="O14832"/>
    </source>
</evidence>
<evidence type="ECO:0000250" key="2">
    <source>
        <dbReference type="UniProtKB" id="Q4WAW9"/>
    </source>
</evidence>
<evidence type="ECO:0000269" key="3">
    <source>
    </source>
</evidence>
<evidence type="ECO:0000303" key="4">
    <source>
    </source>
</evidence>
<evidence type="ECO:0000305" key="5"/>
<feature type="chain" id="PRO_0000449090" description="Dioxygenase aneA">
    <location>
        <begin position="1"/>
        <end position="298"/>
    </location>
</feature>
<feature type="binding site" evidence="1">
    <location>
        <position position="134"/>
    </location>
    <ligand>
        <name>Fe cation</name>
        <dbReference type="ChEBI" id="CHEBI:24875"/>
    </ligand>
</feature>
<feature type="binding site" evidence="1">
    <location>
        <position position="136"/>
    </location>
    <ligand>
        <name>Fe cation</name>
        <dbReference type="ChEBI" id="CHEBI:24875"/>
    </ligand>
</feature>
<feature type="binding site" evidence="1">
    <location>
        <position position="213"/>
    </location>
    <ligand>
        <name>Fe cation</name>
        <dbReference type="ChEBI" id="CHEBI:24875"/>
    </ligand>
</feature>
<name>ANEA_ASPA1</name>
<proteinExistence type="evidence at protein level"/>
<protein>
    <recommendedName>
        <fullName evidence="4">Dioxygenase aneA</fullName>
        <ecNumber evidence="3">1.14.11.-</ecNumber>
    </recommendedName>
    <alternativeName>
        <fullName evidence="4">Aculenes biosynthesis cluster protein A</fullName>
    </alternativeName>
</protein>
<reference key="1">
    <citation type="journal article" date="2017" name="Genome Biol.">
        <title>Comparative genomics reveals high biological diversity and specific adaptations in the industrially and medically important fungal genus Aspergillus.</title>
        <authorList>
            <person name="de Vries R.P."/>
            <person name="Riley R."/>
            <person name="Wiebenga A."/>
            <person name="Aguilar-Osorio G."/>
            <person name="Amillis S."/>
            <person name="Uchima C.A."/>
            <person name="Anderluh G."/>
            <person name="Asadollahi M."/>
            <person name="Askin M."/>
            <person name="Barry K."/>
            <person name="Battaglia E."/>
            <person name="Bayram O."/>
            <person name="Benocci T."/>
            <person name="Braus-Stromeyer S.A."/>
            <person name="Caldana C."/>
            <person name="Canovas D."/>
            <person name="Cerqueira G.C."/>
            <person name="Chen F."/>
            <person name="Chen W."/>
            <person name="Choi C."/>
            <person name="Clum A."/>
            <person name="Dos Santos R.A."/>
            <person name="Damasio A.R."/>
            <person name="Diallinas G."/>
            <person name="Emri T."/>
            <person name="Fekete E."/>
            <person name="Flipphi M."/>
            <person name="Freyberg S."/>
            <person name="Gallo A."/>
            <person name="Gournas C."/>
            <person name="Habgood R."/>
            <person name="Hainaut M."/>
            <person name="Harispe M.L."/>
            <person name="Henrissat B."/>
            <person name="Hilden K.S."/>
            <person name="Hope R."/>
            <person name="Hossain A."/>
            <person name="Karabika E."/>
            <person name="Karaffa L."/>
            <person name="Karanyi Z."/>
            <person name="Krasevec N."/>
            <person name="Kuo A."/>
            <person name="Kusch H."/>
            <person name="LaButti K."/>
            <person name="Lagendijk E.L."/>
            <person name="Lapidus A."/>
            <person name="Levasseur A."/>
            <person name="Lindquist E."/>
            <person name="Lipzen A."/>
            <person name="Logrieco A.F."/>
            <person name="MacCabe A."/>
            <person name="Maekelae M.R."/>
            <person name="Malavazi I."/>
            <person name="Melin P."/>
            <person name="Meyer V."/>
            <person name="Mielnichuk N."/>
            <person name="Miskei M."/>
            <person name="Molnar A.P."/>
            <person name="Mule G."/>
            <person name="Ngan C.Y."/>
            <person name="Orejas M."/>
            <person name="Orosz E."/>
            <person name="Ouedraogo J.P."/>
            <person name="Overkamp K.M."/>
            <person name="Park H.-S."/>
            <person name="Perrone G."/>
            <person name="Piumi F."/>
            <person name="Punt P.J."/>
            <person name="Ram A.F."/>
            <person name="Ramon A."/>
            <person name="Rauscher S."/>
            <person name="Record E."/>
            <person name="Riano-Pachon D.M."/>
            <person name="Robert V."/>
            <person name="Roehrig J."/>
            <person name="Ruller R."/>
            <person name="Salamov A."/>
            <person name="Salih N.S."/>
            <person name="Samson R.A."/>
            <person name="Sandor E."/>
            <person name="Sanguinetti M."/>
            <person name="Schuetze T."/>
            <person name="Sepcic K."/>
            <person name="Shelest E."/>
            <person name="Sherlock G."/>
            <person name="Sophianopoulou V."/>
            <person name="Squina F.M."/>
            <person name="Sun H."/>
            <person name="Susca A."/>
            <person name="Todd R.B."/>
            <person name="Tsang A."/>
            <person name="Unkles S.E."/>
            <person name="van de Wiele N."/>
            <person name="van Rossen-Uffink D."/>
            <person name="Oliveira J.V."/>
            <person name="Vesth T.C."/>
            <person name="Visser J."/>
            <person name="Yu J.-H."/>
            <person name="Zhou M."/>
            <person name="Andersen M.R."/>
            <person name="Archer D.B."/>
            <person name="Baker S.E."/>
            <person name="Benoit I."/>
            <person name="Brakhage A.A."/>
            <person name="Braus G.H."/>
            <person name="Fischer R."/>
            <person name="Frisvad J.C."/>
            <person name="Goldman G.H."/>
            <person name="Houbraken J."/>
            <person name="Oakley B."/>
            <person name="Pocsi I."/>
            <person name="Scazzocchio C."/>
            <person name="Seiboth B."/>
            <person name="vanKuyk P.A."/>
            <person name="Wortman J."/>
            <person name="Dyer P.S."/>
            <person name="Grigoriev I.V."/>
        </authorList>
    </citation>
    <scope>NUCLEOTIDE SEQUENCE [LARGE SCALE GENOMIC DNA]</scope>
    <source>
        <strain>ATCC 16872 / CBS 172.66 / WB 5094</strain>
    </source>
</reference>
<reference key="2">
    <citation type="journal article" date="2019" name="Angew. Chem. Int. Ed.">
        <title>The biosynthesis of norsesquiterpene aculenes requires three cytochrome P450 enzymes to catalyze a stepwise demethylation process.</title>
        <authorList>
            <person name="Lee C.F."/>
            <person name="Chen L.X."/>
            <person name="Chiang C.Y."/>
            <person name="Lai C.Y."/>
            <person name="Lin H.C."/>
        </authorList>
    </citation>
    <scope>FUNCTION</scope>
    <scope>DISRUPTION PHENOTYPE</scope>
    <scope>CATALYTIC ACTIVITY</scope>
    <scope>PATHWAY</scope>
</reference>